<evidence type="ECO:0000305" key="1"/>
<protein>
    <recommendedName>
        <fullName>Alpha-2-macroglobulin homolog</fullName>
        <shortName>Alpha-2-M</shortName>
    </recommendedName>
</protein>
<accession>P30800</accession>
<proteinExistence type="evidence at protein level"/>
<keyword id="KW-0082">Bait region</keyword>
<keyword id="KW-0903">Direct protein sequencing</keyword>
<keyword id="KW-1015">Disulfide bond</keyword>
<keyword id="KW-0646">Protease inhibitor</keyword>
<keyword id="KW-1185">Reference proteome</keyword>
<keyword id="KW-0964">Secreted</keyword>
<keyword id="KW-0722">Serine protease inhibitor</keyword>
<keyword id="KW-0882">Thioester bond</keyword>
<dbReference type="PIR" id="S23971">
    <property type="entry name" value="S23971"/>
</dbReference>
<dbReference type="Proteomes" id="UP000515154">
    <property type="component" value="Unplaced"/>
</dbReference>
<dbReference type="GO" id="GO:0005576">
    <property type="term" value="C:extracellular region"/>
    <property type="evidence" value="ECO:0007669"/>
    <property type="project" value="UniProtKB-SubCell"/>
</dbReference>
<dbReference type="GO" id="GO:0004867">
    <property type="term" value="F:serine-type endopeptidase inhibitor activity"/>
    <property type="evidence" value="ECO:0007669"/>
    <property type="project" value="UniProtKB-KW"/>
</dbReference>
<dbReference type="Gene3D" id="1.50.10.20">
    <property type="match status" value="1"/>
</dbReference>
<dbReference type="InterPro" id="IPR019742">
    <property type="entry name" value="MacrogloblnA2_CS"/>
</dbReference>
<dbReference type="PROSITE" id="PS00477">
    <property type="entry name" value="ALPHA_2_MACROGLOBULIN"/>
    <property type="match status" value="1"/>
</dbReference>
<organism>
    <name type="scientific">Octopus vulgaris</name>
    <name type="common">Common octopus</name>
    <dbReference type="NCBI Taxonomy" id="6645"/>
    <lineage>
        <taxon>Eukaryota</taxon>
        <taxon>Metazoa</taxon>
        <taxon>Spiralia</taxon>
        <taxon>Lophotrochozoa</taxon>
        <taxon>Mollusca</taxon>
        <taxon>Cephalopoda</taxon>
        <taxon>Coleoidea</taxon>
        <taxon>Octopodiformes</taxon>
        <taxon>Octopoda</taxon>
        <taxon>Incirrata</taxon>
        <taxon>Octopodidae</taxon>
        <taxon>Octopus</taxon>
    </lineage>
</organism>
<sequence>KPSGCGEQNMINFYPNVL</sequence>
<comment type="function">
    <text>Is able to inhibit all four classes of proteinases by a unique 'trapping' mechanism. This protein has a peptide stretch, called the 'bait region' which contains specific cleavage sites for different proteinases. When a proteinase cleaves the bait region, a conformational change is induced in the protein which traps the proteinase. The entrapped enzyme remains active against low molecular weight substrates (activity against high molecular weight substrates is greatly reduced). Following cleavage in the bait region a thioester bond is hydrolyzed and mediates the covalent binding of the protein to the proteinase.</text>
</comment>
<comment type="subunit">
    <text>Homodimer; disulfide-linked.</text>
</comment>
<comment type="subcellular location">
    <subcellularLocation>
        <location>Secreted</location>
    </subcellularLocation>
</comment>
<comment type="similarity">
    <text evidence="1">Belongs to the protease inhibitor I39 (alpha-2-macroglobulin) family.</text>
</comment>
<feature type="chain" id="PRO_0000093792" description="Alpha-2-macroglobulin homolog">
    <location>
        <begin position="1" status="less than"/>
        <end position="18" status="greater than"/>
    </location>
</feature>
<feature type="cross-link" description="Isoglutamyl cysteine thioester (Cys-Gln)">
    <location>
        <begin position="5"/>
        <end position="8"/>
    </location>
</feature>
<feature type="non-terminal residue">
    <location>
        <position position="1"/>
    </location>
</feature>
<feature type="non-terminal residue">
    <location>
        <position position="18"/>
    </location>
</feature>
<reference key="1">
    <citation type="journal article" date="1992" name="Biochem. J.">
        <title>Purification and characterization of an alpha-macroglobulin proteinase inhibitor from the mollusc Octopus vulgaris.</title>
        <authorList>
            <person name="Thoegersen I.B."/>
            <person name="Salvesen G."/>
            <person name="Brucato F.H."/>
            <person name="Pizzo S.V."/>
            <person name="Enghild J.J."/>
        </authorList>
    </citation>
    <scope>PROTEIN SEQUENCE</scope>
</reference>
<name>A2M_OCTVU</name>